<evidence type="ECO:0000255" key="1">
    <source>
        <dbReference type="HAMAP-Rule" id="MF_01961"/>
    </source>
</evidence>
<reference key="1">
    <citation type="journal article" date="2003" name="Genome Res.">
        <title>Comparative genome analysis of Vibrio vulnificus, a marine pathogen.</title>
        <authorList>
            <person name="Chen C.-Y."/>
            <person name="Wu K.-M."/>
            <person name="Chang Y.-C."/>
            <person name="Chang C.-H."/>
            <person name="Tsai H.-C."/>
            <person name="Liao T.-L."/>
            <person name="Liu Y.-M."/>
            <person name="Chen H.-J."/>
            <person name="Shen A.B.-T."/>
            <person name="Li J.-C."/>
            <person name="Su T.-L."/>
            <person name="Shao C.-P."/>
            <person name="Lee C.-T."/>
            <person name="Hor L.-I."/>
            <person name="Tsai S.-F."/>
        </authorList>
    </citation>
    <scope>NUCLEOTIDE SEQUENCE [LARGE SCALE GENOMIC DNA]</scope>
    <source>
        <strain>YJ016</strain>
    </source>
</reference>
<name>KATG_VIBVY</name>
<protein>
    <recommendedName>
        <fullName evidence="1">Catalase-peroxidase</fullName>
        <shortName evidence="1">CP</shortName>
        <ecNumber evidence="1">1.11.1.21</ecNumber>
    </recommendedName>
    <alternativeName>
        <fullName evidence="1">Peroxidase/catalase</fullName>
    </alternativeName>
</protein>
<proteinExistence type="inferred from homology"/>
<organism>
    <name type="scientific">Vibrio vulnificus (strain YJ016)</name>
    <dbReference type="NCBI Taxonomy" id="196600"/>
    <lineage>
        <taxon>Bacteria</taxon>
        <taxon>Pseudomonadati</taxon>
        <taxon>Pseudomonadota</taxon>
        <taxon>Gammaproteobacteria</taxon>
        <taxon>Vibrionales</taxon>
        <taxon>Vibrionaceae</taxon>
        <taxon>Vibrio</taxon>
    </lineage>
</organism>
<feature type="chain" id="PRO_0000354953" description="Catalase-peroxidase">
    <location>
        <begin position="1"/>
        <end position="723"/>
    </location>
</feature>
<feature type="active site" description="Proton acceptor" evidence="1">
    <location>
        <position position="99"/>
    </location>
</feature>
<feature type="binding site" description="axial binding residue" evidence="1">
    <location>
        <position position="267"/>
    </location>
    <ligand>
        <name>heme b</name>
        <dbReference type="ChEBI" id="CHEBI:60344"/>
    </ligand>
    <ligandPart>
        <name>Fe</name>
        <dbReference type="ChEBI" id="CHEBI:18248"/>
    </ligandPart>
</feature>
<feature type="site" description="Transition state stabilizer" evidence="1">
    <location>
        <position position="95"/>
    </location>
</feature>
<feature type="cross-link" description="Tryptophyl-tyrosyl-methioninium (Trp-Tyr) (with M-252)" evidence="1">
    <location>
        <begin position="98"/>
        <end position="226"/>
    </location>
</feature>
<feature type="cross-link" description="Tryptophyl-tyrosyl-methioninium (Tyr-Met) (with W-98)" evidence="1">
    <location>
        <begin position="226"/>
        <end position="252"/>
    </location>
</feature>
<sequence length="723" mass="80506">MEHKPTHTSGQCPVMHGGATSSNSSNVAWWPKALNLDILHQHDRKSNPMGADFSYREELKKLDVEALKRDLKALMTDSQDWWPADWGHYGGLMIRMAWHSAGSYRVGDGRGGADTGNQRFAPLNSWPDNANLDKARRLLWPIKQKYGNKISWADLMILAGNMAYESMGLKTFGFAFGREDIWHPEKDIYWGAEQEWLAPSGAENSRYSGERDLENPLAAVMMGLIYVNPEGVDGNPDPLKTAKDMRVTFARMGMNDEETVALTAGGHTVGKAHGNGNAANLGADPESADLEEQGLGWNNHKSRGIGRDTVTSGIEGAWTTNPTQWDNGFFHLLFSYDWWLQKSPAGAWQWEPVNIKEEDKPVDVEDPTIRHNPIMTDADMALKLDPEYRKISERFHKDPAYFSETFARAWFKLTHRDMGPKARYFGPDVPVEELIWQDPVPTGRKDYDVDAVKAKIIASGLSTGELVSTAWDSARTFRNSDKRGGANGARIRLAPQKDWLGNEPEKLAKVLNVLEAIASEFNISVADTIVLAGNVGVEQAAKAAGIAITVPFAAGRGDATIEQTDVESFEVLEPIADGFRNWQKQHYAVNPEELLLDRAQLLGLSAPEMTVLIGGLRVIGTNHGDNKHGVFTDNVGALSNDFFVNLTDMRYTWKPTGRNSYDIVERNSGNVKWTATRVDLVFGSNSILRAYAEVYAQDDNKEKFVKDFVAAWTKVMNADRFDI</sequence>
<comment type="function">
    <text evidence="1">Bifunctional enzyme with both catalase and broad-spectrum peroxidase activity.</text>
</comment>
<comment type="catalytic activity">
    <reaction evidence="1">
        <text>H2O2 + AH2 = A + 2 H2O</text>
        <dbReference type="Rhea" id="RHEA:30275"/>
        <dbReference type="ChEBI" id="CHEBI:13193"/>
        <dbReference type="ChEBI" id="CHEBI:15377"/>
        <dbReference type="ChEBI" id="CHEBI:16240"/>
        <dbReference type="ChEBI" id="CHEBI:17499"/>
        <dbReference type="EC" id="1.11.1.21"/>
    </reaction>
</comment>
<comment type="catalytic activity">
    <reaction evidence="1">
        <text>2 H2O2 = O2 + 2 H2O</text>
        <dbReference type="Rhea" id="RHEA:20309"/>
        <dbReference type="ChEBI" id="CHEBI:15377"/>
        <dbReference type="ChEBI" id="CHEBI:15379"/>
        <dbReference type="ChEBI" id="CHEBI:16240"/>
        <dbReference type="EC" id="1.11.1.21"/>
    </reaction>
</comment>
<comment type="cofactor">
    <cofactor evidence="1">
        <name>heme b</name>
        <dbReference type="ChEBI" id="CHEBI:60344"/>
    </cofactor>
    <text evidence="1">Binds 1 heme b (iron(II)-protoporphyrin IX) group per dimer.</text>
</comment>
<comment type="subunit">
    <text evidence="1">Homodimer or homotetramer.</text>
</comment>
<comment type="PTM">
    <text evidence="1">Formation of the three residue Trp-Tyr-Met cross-link is important for the catalase, but not the peroxidase activity of the enzyme.</text>
</comment>
<comment type="similarity">
    <text evidence="1">Belongs to the peroxidase family. Peroxidase/catalase subfamily.</text>
</comment>
<accession>Q7MLC1</accession>
<gene>
    <name evidence="1" type="primary">katG</name>
    <name type="ordered locus">VV1506</name>
</gene>
<dbReference type="EC" id="1.11.1.21" evidence="1"/>
<dbReference type="EMBL" id="BA000037">
    <property type="protein sequence ID" value="BAC94270.1"/>
    <property type="molecule type" value="Genomic_DNA"/>
</dbReference>
<dbReference type="RefSeq" id="WP_011150138.1">
    <property type="nucleotide sequence ID" value="NC_005139.1"/>
</dbReference>
<dbReference type="SMR" id="Q7MLC1"/>
<dbReference type="STRING" id="672.VV93_v1c14140"/>
<dbReference type="PeroxiBase" id="2649">
    <property type="entry name" value="VvuCP_YJ016"/>
</dbReference>
<dbReference type="KEGG" id="vvy:VV1506"/>
<dbReference type="PATRIC" id="fig|196600.6.peg.1491"/>
<dbReference type="eggNOG" id="COG0376">
    <property type="taxonomic scope" value="Bacteria"/>
</dbReference>
<dbReference type="HOGENOM" id="CLU_025424_2_0_6"/>
<dbReference type="Proteomes" id="UP000002675">
    <property type="component" value="Chromosome I"/>
</dbReference>
<dbReference type="GO" id="GO:0005829">
    <property type="term" value="C:cytosol"/>
    <property type="evidence" value="ECO:0007669"/>
    <property type="project" value="TreeGrafter"/>
</dbReference>
<dbReference type="GO" id="GO:0004096">
    <property type="term" value="F:catalase activity"/>
    <property type="evidence" value="ECO:0007669"/>
    <property type="project" value="UniProtKB-UniRule"/>
</dbReference>
<dbReference type="GO" id="GO:0020037">
    <property type="term" value="F:heme binding"/>
    <property type="evidence" value="ECO:0007669"/>
    <property type="project" value="InterPro"/>
</dbReference>
<dbReference type="GO" id="GO:0046872">
    <property type="term" value="F:metal ion binding"/>
    <property type="evidence" value="ECO:0007669"/>
    <property type="project" value="UniProtKB-KW"/>
</dbReference>
<dbReference type="GO" id="GO:0070301">
    <property type="term" value="P:cellular response to hydrogen peroxide"/>
    <property type="evidence" value="ECO:0007669"/>
    <property type="project" value="TreeGrafter"/>
</dbReference>
<dbReference type="GO" id="GO:0042744">
    <property type="term" value="P:hydrogen peroxide catabolic process"/>
    <property type="evidence" value="ECO:0007669"/>
    <property type="project" value="UniProtKB-KW"/>
</dbReference>
<dbReference type="CDD" id="cd00649">
    <property type="entry name" value="catalase_peroxidase_1"/>
    <property type="match status" value="1"/>
</dbReference>
<dbReference type="CDD" id="cd08200">
    <property type="entry name" value="catalase_peroxidase_2"/>
    <property type="match status" value="1"/>
</dbReference>
<dbReference type="FunFam" id="1.10.420.10:FF:000002">
    <property type="entry name" value="Catalase-peroxidase"/>
    <property type="match status" value="1"/>
</dbReference>
<dbReference type="FunFam" id="1.10.420.10:FF:000004">
    <property type="entry name" value="Catalase-peroxidase"/>
    <property type="match status" value="1"/>
</dbReference>
<dbReference type="FunFam" id="1.10.520.10:FF:000002">
    <property type="entry name" value="Catalase-peroxidase"/>
    <property type="match status" value="1"/>
</dbReference>
<dbReference type="Gene3D" id="1.10.520.10">
    <property type="match status" value="2"/>
</dbReference>
<dbReference type="Gene3D" id="1.10.420.10">
    <property type="entry name" value="Peroxidase, domain 2"/>
    <property type="match status" value="2"/>
</dbReference>
<dbReference type="HAMAP" id="MF_01961">
    <property type="entry name" value="Catal_peroxid"/>
    <property type="match status" value="1"/>
</dbReference>
<dbReference type="InterPro" id="IPR000763">
    <property type="entry name" value="Catalase_peroxidase"/>
</dbReference>
<dbReference type="InterPro" id="IPR002016">
    <property type="entry name" value="Haem_peroxidase"/>
</dbReference>
<dbReference type="InterPro" id="IPR010255">
    <property type="entry name" value="Haem_peroxidase_sf"/>
</dbReference>
<dbReference type="InterPro" id="IPR019794">
    <property type="entry name" value="Peroxidases_AS"/>
</dbReference>
<dbReference type="NCBIfam" id="TIGR00198">
    <property type="entry name" value="cat_per_HPI"/>
    <property type="match status" value="1"/>
</dbReference>
<dbReference type="NCBIfam" id="NF011635">
    <property type="entry name" value="PRK15061.1"/>
    <property type="match status" value="1"/>
</dbReference>
<dbReference type="PANTHER" id="PTHR30555:SF6">
    <property type="entry name" value="CATALASE-PEROXIDASE"/>
    <property type="match status" value="1"/>
</dbReference>
<dbReference type="PANTHER" id="PTHR30555">
    <property type="entry name" value="HYDROPEROXIDASE I, BIFUNCTIONAL CATALASE-PEROXIDASE"/>
    <property type="match status" value="1"/>
</dbReference>
<dbReference type="Pfam" id="PF00141">
    <property type="entry name" value="peroxidase"/>
    <property type="match status" value="2"/>
</dbReference>
<dbReference type="PRINTS" id="PR00460">
    <property type="entry name" value="BPEROXIDASE"/>
</dbReference>
<dbReference type="PRINTS" id="PR00458">
    <property type="entry name" value="PEROXIDASE"/>
</dbReference>
<dbReference type="SUPFAM" id="SSF48113">
    <property type="entry name" value="Heme-dependent peroxidases"/>
    <property type="match status" value="2"/>
</dbReference>
<dbReference type="PROSITE" id="PS00436">
    <property type="entry name" value="PEROXIDASE_2"/>
    <property type="match status" value="1"/>
</dbReference>
<dbReference type="PROSITE" id="PS50873">
    <property type="entry name" value="PEROXIDASE_4"/>
    <property type="match status" value="1"/>
</dbReference>
<keyword id="KW-0349">Heme</keyword>
<keyword id="KW-0376">Hydrogen peroxide</keyword>
<keyword id="KW-0408">Iron</keyword>
<keyword id="KW-0479">Metal-binding</keyword>
<keyword id="KW-0560">Oxidoreductase</keyword>
<keyword id="KW-0575">Peroxidase</keyword>